<feature type="chain" id="PRO_0000106809" description="Uncharacterized protein MJ0339">
    <location>
        <begin position="1"/>
        <end position="107"/>
    </location>
</feature>
<name>Y339_METJA</name>
<keyword id="KW-1185">Reference proteome</keyword>
<accession>Q57785</accession>
<organism>
    <name type="scientific">Methanocaldococcus jannaschii (strain ATCC 43067 / DSM 2661 / JAL-1 / JCM 10045 / NBRC 100440)</name>
    <name type="common">Methanococcus jannaschii</name>
    <dbReference type="NCBI Taxonomy" id="243232"/>
    <lineage>
        <taxon>Archaea</taxon>
        <taxon>Methanobacteriati</taxon>
        <taxon>Methanobacteriota</taxon>
        <taxon>Methanomada group</taxon>
        <taxon>Methanococci</taxon>
        <taxon>Methanococcales</taxon>
        <taxon>Methanocaldococcaceae</taxon>
        <taxon>Methanocaldococcus</taxon>
    </lineage>
</organism>
<proteinExistence type="predicted"/>
<gene>
    <name type="ordered locus">MJ0339</name>
</gene>
<sequence>MKKRGRCSLTNYANAKALVEKILEDLKNNGIKVKSPLSKIQDFHCEADFSVEIENRVAYVDATFTFDKLPNEDLVEKIEAVMTTYNSYLERIDFESDYTKLEFRSVR</sequence>
<protein>
    <recommendedName>
        <fullName>Uncharacterized protein MJ0339</fullName>
    </recommendedName>
</protein>
<dbReference type="EMBL" id="L77117">
    <property type="protein sequence ID" value="AAB98327.1"/>
    <property type="molecule type" value="Genomic_DNA"/>
</dbReference>
<dbReference type="PIR" id="C64342">
    <property type="entry name" value="C64342"/>
</dbReference>
<dbReference type="RefSeq" id="WP_010869837.1">
    <property type="nucleotide sequence ID" value="NC_000909.1"/>
</dbReference>
<dbReference type="STRING" id="243232.MJ_0339"/>
<dbReference type="PaxDb" id="243232-MJ_0339"/>
<dbReference type="EnsemblBacteria" id="AAB98327">
    <property type="protein sequence ID" value="AAB98327"/>
    <property type="gene ID" value="MJ_0339"/>
</dbReference>
<dbReference type="GeneID" id="1451195"/>
<dbReference type="KEGG" id="mja:MJ_0339"/>
<dbReference type="eggNOG" id="arCOG09644">
    <property type="taxonomic scope" value="Archaea"/>
</dbReference>
<dbReference type="HOGENOM" id="CLU_2204112_0_0_2"/>
<dbReference type="InParanoid" id="Q57785"/>
<dbReference type="OrthoDB" id="373324at2157"/>
<dbReference type="Proteomes" id="UP000000805">
    <property type="component" value="Chromosome"/>
</dbReference>
<reference key="1">
    <citation type="journal article" date="1996" name="Science">
        <title>Complete genome sequence of the methanogenic archaeon, Methanococcus jannaschii.</title>
        <authorList>
            <person name="Bult C.J."/>
            <person name="White O."/>
            <person name="Olsen G.J."/>
            <person name="Zhou L."/>
            <person name="Fleischmann R.D."/>
            <person name="Sutton G.G."/>
            <person name="Blake J.A."/>
            <person name="FitzGerald L.M."/>
            <person name="Clayton R.A."/>
            <person name="Gocayne J.D."/>
            <person name="Kerlavage A.R."/>
            <person name="Dougherty B.A."/>
            <person name="Tomb J.-F."/>
            <person name="Adams M.D."/>
            <person name="Reich C.I."/>
            <person name="Overbeek R."/>
            <person name="Kirkness E.F."/>
            <person name="Weinstock K.G."/>
            <person name="Merrick J.M."/>
            <person name="Glodek A."/>
            <person name="Scott J.L."/>
            <person name="Geoghagen N.S.M."/>
            <person name="Weidman J.F."/>
            <person name="Fuhrmann J.L."/>
            <person name="Nguyen D."/>
            <person name="Utterback T.R."/>
            <person name="Kelley J.M."/>
            <person name="Peterson J.D."/>
            <person name="Sadow P.W."/>
            <person name="Hanna M.C."/>
            <person name="Cotton M.D."/>
            <person name="Roberts K.M."/>
            <person name="Hurst M.A."/>
            <person name="Kaine B.P."/>
            <person name="Borodovsky M."/>
            <person name="Klenk H.-P."/>
            <person name="Fraser C.M."/>
            <person name="Smith H.O."/>
            <person name="Woese C.R."/>
            <person name="Venter J.C."/>
        </authorList>
    </citation>
    <scope>NUCLEOTIDE SEQUENCE [LARGE SCALE GENOMIC DNA]</scope>
    <source>
        <strain>ATCC 43067 / DSM 2661 / JAL-1 / JCM 10045 / NBRC 100440</strain>
    </source>
</reference>